<dbReference type="EMBL" id="Z49328">
    <property type="status" value="NOT_ANNOTATED_CDS"/>
    <property type="molecule type" value="Genomic_DNA"/>
</dbReference>
<dbReference type="EMBL" id="BK006943">
    <property type="protein sequence ID" value="DAA08746.1"/>
    <property type="molecule type" value="Genomic_DNA"/>
</dbReference>
<dbReference type="RefSeq" id="NP_076895.1">
    <property type="nucleotide sequence ID" value="NM_001184476.1"/>
</dbReference>
<dbReference type="BioGRID" id="33702">
    <property type="interactions" value="16"/>
</dbReference>
<dbReference type="FunCoup" id="Q3E837">
    <property type="interactions" value="13"/>
</dbReference>
<dbReference type="STRING" id="4932.YJL052C-A"/>
<dbReference type="PaxDb" id="4932-YJL052C-A"/>
<dbReference type="EnsemblFungi" id="YJL052C-A_mRNA">
    <property type="protein sequence ID" value="YJL052C-A"/>
    <property type="gene ID" value="YJL052C-A"/>
</dbReference>
<dbReference type="GeneID" id="853394"/>
<dbReference type="KEGG" id="sce:YJL052C-A"/>
<dbReference type="AGR" id="SGD:S000007610"/>
<dbReference type="SGD" id="S000007610">
    <property type="gene designation" value="YJL052C-A"/>
</dbReference>
<dbReference type="VEuPathDB" id="FungiDB:YJL052C-A"/>
<dbReference type="HOGENOM" id="CLU_3320278_0_0_1"/>
<dbReference type="InParanoid" id="Q3E837"/>
<dbReference type="OrthoDB" id="10293971at2759"/>
<dbReference type="BioCyc" id="YEAST:G3O-31801-MONOMER"/>
<dbReference type="BioGRID-ORCS" id="853394">
    <property type="hits" value="0 hits in 10 CRISPR screens"/>
</dbReference>
<dbReference type="PRO" id="PR:Q3E837"/>
<dbReference type="Proteomes" id="UP000002311">
    <property type="component" value="Chromosome X"/>
</dbReference>
<keyword id="KW-1185">Reference proteome</keyword>
<keyword id="KW-0732">Signal</keyword>
<sequence length="39" mass="4551">MHLRSRWWLALLYCKDPVSRSATTPKVETRASCLLSRAF</sequence>
<gene>
    <name type="ordered locus">YJL052C-A</name>
</gene>
<protein>
    <recommendedName>
        <fullName>Uncharacterized protein YJL052C-A</fullName>
    </recommendedName>
</protein>
<reference key="1">
    <citation type="journal article" date="1996" name="EMBO J.">
        <title>Complete nucleotide sequence of Saccharomyces cerevisiae chromosome X.</title>
        <authorList>
            <person name="Galibert F."/>
            <person name="Alexandraki D."/>
            <person name="Baur A."/>
            <person name="Boles E."/>
            <person name="Chalwatzis N."/>
            <person name="Chuat J.-C."/>
            <person name="Coster F."/>
            <person name="Cziepluch C."/>
            <person name="de Haan M."/>
            <person name="Domdey H."/>
            <person name="Durand P."/>
            <person name="Entian K.-D."/>
            <person name="Gatius M."/>
            <person name="Goffeau A."/>
            <person name="Grivell L.A."/>
            <person name="Hennemann A."/>
            <person name="Herbert C.J."/>
            <person name="Heumann K."/>
            <person name="Hilger F."/>
            <person name="Hollenberg C.P."/>
            <person name="Huang M.-E."/>
            <person name="Jacq C."/>
            <person name="Jauniaux J.-C."/>
            <person name="Katsoulou C."/>
            <person name="Kirchrath L."/>
            <person name="Kleine K."/>
            <person name="Kordes E."/>
            <person name="Koetter P."/>
            <person name="Liebl S."/>
            <person name="Louis E.J."/>
            <person name="Manus V."/>
            <person name="Mewes H.-W."/>
            <person name="Miosga T."/>
            <person name="Obermaier B."/>
            <person name="Perea J."/>
            <person name="Pohl T.M."/>
            <person name="Portetelle D."/>
            <person name="Pujol A."/>
            <person name="Purnelle B."/>
            <person name="Ramezani Rad M."/>
            <person name="Rasmussen S.W."/>
            <person name="Rose M."/>
            <person name="Rossau R."/>
            <person name="Schaaff-Gerstenschlaeger I."/>
            <person name="Smits P.H.M."/>
            <person name="Scarcez T."/>
            <person name="Soriano N."/>
            <person name="To Van D."/>
            <person name="Tzermia M."/>
            <person name="Van Broekhoven A."/>
            <person name="Vandenbol M."/>
            <person name="Wedler H."/>
            <person name="von Wettstein D."/>
            <person name="Wambutt R."/>
            <person name="Zagulski M."/>
            <person name="Zollner A."/>
            <person name="Karpfinger-Hartl L."/>
        </authorList>
    </citation>
    <scope>NUCLEOTIDE SEQUENCE [LARGE SCALE GENOMIC DNA]</scope>
    <source>
        <strain>ATCC 204508 / S288c</strain>
    </source>
</reference>
<reference key="2">
    <citation type="journal article" date="2014" name="G3 (Bethesda)">
        <title>The reference genome sequence of Saccharomyces cerevisiae: Then and now.</title>
        <authorList>
            <person name="Engel S.R."/>
            <person name="Dietrich F.S."/>
            <person name="Fisk D.G."/>
            <person name="Binkley G."/>
            <person name="Balakrishnan R."/>
            <person name="Costanzo M.C."/>
            <person name="Dwight S.S."/>
            <person name="Hitz B.C."/>
            <person name="Karra K."/>
            <person name="Nash R.S."/>
            <person name="Weng S."/>
            <person name="Wong E.D."/>
            <person name="Lloyd P."/>
            <person name="Skrzypek M.S."/>
            <person name="Miyasato S.R."/>
            <person name="Simison M."/>
            <person name="Cherry J.M."/>
        </authorList>
    </citation>
    <scope>GENOME REANNOTATION</scope>
    <source>
        <strain>ATCC 204508 / S288c</strain>
    </source>
</reference>
<reference key="3">
    <citation type="journal article" date="2000" name="FEBS Lett.">
        <title>Genomic exploration of the hemiascomycetous yeasts: 4. The genome of Saccharomyces cerevisiae revisited.</title>
        <authorList>
            <person name="Blandin G."/>
            <person name="Durrens P."/>
            <person name="Tekaia F."/>
            <person name="Aigle M."/>
            <person name="Bolotin-Fukuhara M."/>
            <person name="Bon E."/>
            <person name="Casaregola S."/>
            <person name="de Montigny J."/>
            <person name="Gaillardin C."/>
            <person name="Lepingle A."/>
            <person name="Llorente B."/>
            <person name="Malpertuy A."/>
            <person name="Neuveglise C."/>
            <person name="Ozier-Kalogeropoulos O."/>
            <person name="Perrin A."/>
            <person name="Potier S."/>
            <person name="Souciet J.-L."/>
            <person name="Talla E."/>
            <person name="Toffano-Nioche C."/>
            <person name="Wesolowski-Louvel M."/>
            <person name="Marck C."/>
            <person name="Dujon B."/>
        </authorList>
    </citation>
    <scope>GENOME REANNOTATION</scope>
</reference>
<accession>Q3E837</accession>
<accession>D6VWD0</accession>
<name>YJ052_YEAST</name>
<feature type="signal peptide" evidence="1">
    <location>
        <begin position="1"/>
        <end position="21"/>
    </location>
</feature>
<feature type="chain" id="PRO_0000245413" description="Uncharacterized protein YJL052C-A">
    <location>
        <begin position="22"/>
        <end position="39"/>
    </location>
</feature>
<organism>
    <name type="scientific">Saccharomyces cerevisiae (strain ATCC 204508 / S288c)</name>
    <name type="common">Baker's yeast</name>
    <dbReference type="NCBI Taxonomy" id="559292"/>
    <lineage>
        <taxon>Eukaryota</taxon>
        <taxon>Fungi</taxon>
        <taxon>Dikarya</taxon>
        <taxon>Ascomycota</taxon>
        <taxon>Saccharomycotina</taxon>
        <taxon>Saccharomycetes</taxon>
        <taxon>Saccharomycetales</taxon>
        <taxon>Saccharomycetaceae</taxon>
        <taxon>Saccharomyces</taxon>
    </lineage>
</organism>
<proteinExistence type="inferred from homology"/>
<evidence type="ECO:0000255" key="1"/>